<evidence type="ECO:0000250" key="1"/>
<evidence type="ECO:0000269" key="2">
    <source>
    </source>
</evidence>
<evidence type="ECO:0000269" key="3">
    <source>
    </source>
</evidence>
<evidence type="ECO:0000305" key="4"/>
<sequence>MAGILRSIVQRPPGRLQTATKGVEPLVCVDWIRHKFTRSRIPDEVFRPSPEDHEKYGGDPQQPHKLHIVTRIKSTKRRPYWEKDIIKMLGLQKAHTPQVHKNIPSVNAKLKIVKHLIRIKPLKLPQGLPTEEDMSNTCLKSTGELVTRWLLNPADQEAKKC</sequence>
<proteinExistence type="evidence at protein level"/>
<protein>
    <recommendedName>
        <fullName evidence="4">Large ribosomal subunit protein uL30m</fullName>
    </recommendedName>
    <alternativeName>
        <fullName>39S ribosomal protein L30, mitochondrial</fullName>
        <shortName>L30mt</shortName>
        <shortName>MRP-L30</shortName>
    </alternativeName>
</protein>
<reference key="1">
    <citation type="journal article" date="2005" name="BMC Genomics">
        <title>Characterization of 954 bovine full-CDS cDNA sequences.</title>
        <authorList>
            <person name="Harhay G.P."/>
            <person name="Sonstegard T.S."/>
            <person name="Keele J.W."/>
            <person name="Heaton M.P."/>
            <person name="Clawson M.L."/>
            <person name="Snelling W.M."/>
            <person name="Wiedmann R.T."/>
            <person name="Van Tassell C.P."/>
            <person name="Smith T.P.L."/>
        </authorList>
    </citation>
    <scope>NUCLEOTIDE SEQUENCE [LARGE SCALE MRNA]</scope>
</reference>
<reference key="2">
    <citation type="submission" date="2006-01" db="EMBL/GenBank/DDBJ databases">
        <authorList>
            <consortium name="NIH - Mammalian Gene Collection (MGC) project"/>
        </authorList>
    </citation>
    <scope>NUCLEOTIDE SEQUENCE [LARGE SCALE MRNA]</scope>
    <source>
        <strain>Hereford</strain>
        <tissue>Hypothalamus</tissue>
    </source>
</reference>
<reference key="3">
    <citation type="journal article" date="2001" name="J. Biol. Chem.">
        <title>Structural compensation for the deficit of rRNA with proteins in the mammalian mitochondrial ribosome. Systematic analysis of protein components of the large ribosomal subunit from mammalian mitochondria.</title>
        <authorList>
            <person name="Suzuki T."/>
            <person name="Terasaki M."/>
            <person name="Takemoto-Hori C."/>
            <person name="Hanada T."/>
            <person name="Ueda T."/>
            <person name="Wada A."/>
            <person name="Watanabe K."/>
        </authorList>
    </citation>
    <scope>IDENTIFICATION BY MASS SPECTROMETRY</scope>
    <scope>SUBCELLULAR LOCATION</scope>
    <scope>SUBUNIT</scope>
</reference>
<reference key="4">
    <citation type="journal article" date="2001" name="J. Biol. Chem.">
        <title>The large subunit of the mammalian mitochondrial ribosome. Analysis of the complement of ribosomal proteins present.</title>
        <authorList>
            <person name="Koc E.C."/>
            <person name="Burkhart W."/>
            <person name="Blackburn K."/>
            <person name="Moyer M.B."/>
            <person name="Schlatzer D.M."/>
            <person name="Moseley A."/>
            <person name="Spremulli L.L."/>
        </authorList>
    </citation>
    <scope>IDENTIFICATION BY MASS SPECTROMETRY</scope>
    <scope>SUBCELLULAR LOCATION</scope>
    <scope>SUBUNIT</scope>
</reference>
<keyword id="KW-0496">Mitochondrion</keyword>
<keyword id="KW-1185">Reference proteome</keyword>
<keyword id="KW-0687">Ribonucleoprotein</keyword>
<keyword id="KW-0689">Ribosomal protein</keyword>
<keyword id="KW-0809">Transit peptide</keyword>
<comment type="subunit">
    <text evidence="2 3">Component of the mitochondrial ribosome large subunit (39S) which comprises a 16S rRNA and about 50 distinct proteins.</text>
</comment>
<comment type="subcellular location">
    <subcellularLocation>
        <location evidence="2 3">Mitochondrion</location>
    </subcellularLocation>
</comment>
<comment type="similarity">
    <text evidence="4">Belongs to the universal ribosomal protein uL30 family.</text>
</comment>
<dbReference type="EMBL" id="BT021492">
    <property type="protein sequence ID" value="AAX46339.1"/>
    <property type="molecule type" value="mRNA"/>
</dbReference>
<dbReference type="EMBL" id="BC112734">
    <property type="protein sequence ID" value="AAI12735.1"/>
    <property type="molecule type" value="mRNA"/>
</dbReference>
<dbReference type="RefSeq" id="NP_001030520.1">
    <property type="nucleotide sequence ID" value="NM_001035443.1"/>
</dbReference>
<dbReference type="RefSeq" id="XP_005212407.1">
    <property type="nucleotide sequence ID" value="XM_005212350.3"/>
</dbReference>
<dbReference type="SMR" id="Q58DV5"/>
<dbReference type="FunCoup" id="Q58DV5">
    <property type="interactions" value="1488"/>
</dbReference>
<dbReference type="STRING" id="9913.ENSBTAP00000005183"/>
<dbReference type="PaxDb" id="9913-ENSBTAP00000005183"/>
<dbReference type="GeneID" id="614151"/>
<dbReference type="KEGG" id="bta:614151"/>
<dbReference type="CTD" id="51263"/>
<dbReference type="eggNOG" id="KOG4799">
    <property type="taxonomic scope" value="Eukaryota"/>
</dbReference>
<dbReference type="HOGENOM" id="CLU_139849_0_0_1"/>
<dbReference type="InParanoid" id="Q58DV5"/>
<dbReference type="OrthoDB" id="9973389at2759"/>
<dbReference type="TreeFam" id="TF314611"/>
<dbReference type="Proteomes" id="UP000009136">
    <property type="component" value="Unplaced"/>
</dbReference>
<dbReference type="GO" id="GO:0005743">
    <property type="term" value="C:mitochondrial inner membrane"/>
    <property type="evidence" value="ECO:0000304"/>
    <property type="project" value="Reactome"/>
</dbReference>
<dbReference type="GO" id="GO:0005762">
    <property type="term" value="C:mitochondrial large ribosomal subunit"/>
    <property type="evidence" value="ECO:0000250"/>
    <property type="project" value="UniProtKB"/>
</dbReference>
<dbReference type="GO" id="GO:0005739">
    <property type="term" value="C:mitochondrion"/>
    <property type="evidence" value="ECO:0000318"/>
    <property type="project" value="GO_Central"/>
</dbReference>
<dbReference type="GO" id="GO:0003735">
    <property type="term" value="F:structural constituent of ribosome"/>
    <property type="evidence" value="ECO:0007669"/>
    <property type="project" value="InterPro"/>
</dbReference>
<dbReference type="GO" id="GO:0006412">
    <property type="term" value="P:translation"/>
    <property type="evidence" value="ECO:0007669"/>
    <property type="project" value="InterPro"/>
</dbReference>
<dbReference type="CDD" id="cd01658">
    <property type="entry name" value="Ribosomal_L30"/>
    <property type="match status" value="1"/>
</dbReference>
<dbReference type="FunFam" id="3.30.1390.20:FF:000005">
    <property type="entry name" value="39S ribosomal protein L30, mitochondrial"/>
    <property type="match status" value="1"/>
</dbReference>
<dbReference type="Gene3D" id="3.30.1390.20">
    <property type="entry name" value="Ribosomal protein L30, ferredoxin-like fold domain"/>
    <property type="match status" value="1"/>
</dbReference>
<dbReference type="InterPro" id="IPR036919">
    <property type="entry name" value="Ribo_uL30_ferredoxin-like_sf"/>
</dbReference>
<dbReference type="InterPro" id="IPR005996">
    <property type="entry name" value="Ribosomal_uL30_bac-type"/>
</dbReference>
<dbReference type="InterPro" id="IPR016082">
    <property type="entry name" value="Ribosomal_uL30_ferredoxin-like"/>
</dbReference>
<dbReference type="PANTHER" id="PTHR15892:SF2">
    <property type="entry name" value="LARGE RIBOSOMAL SUBUNIT PROTEIN UL30M"/>
    <property type="match status" value="1"/>
</dbReference>
<dbReference type="PANTHER" id="PTHR15892">
    <property type="entry name" value="MITOCHONDRIAL RIBOSOMAL PROTEIN L30"/>
    <property type="match status" value="1"/>
</dbReference>
<dbReference type="Pfam" id="PF00327">
    <property type="entry name" value="Ribosomal_L30"/>
    <property type="match status" value="1"/>
</dbReference>
<dbReference type="SUPFAM" id="SSF55129">
    <property type="entry name" value="Ribosomal protein L30p/L7e"/>
    <property type="match status" value="1"/>
</dbReference>
<feature type="transit peptide" description="Mitochondrion" evidence="1">
    <location>
        <begin position="1"/>
        <end position="34"/>
    </location>
</feature>
<feature type="chain" id="PRO_0000261648" description="Large ribosomal subunit protein uL30m">
    <location>
        <begin position="35"/>
        <end position="161"/>
    </location>
</feature>
<feature type="sequence conflict" description="In Ref. 2; AAI12735." evidence="4" ref="2">
    <original>V</original>
    <variation>T</variation>
    <location>
        <position position="29"/>
    </location>
</feature>
<accession>Q58DV5</accession>
<accession>Q2KI82</accession>
<organism>
    <name type="scientific">Bos taurus</name>
    <name type="common">Bovine</name>
    <dbReference type="NCBI Taxonomy" id="9913"/>
    <lineage>
        <taxon>Eukaryota</taxon>
        <taxon>Metazoa</taxon>
        <taxon>Chordata</taxon>
        <taxon>Craniata</taxon>
        <taxon>Vertebrata</taxon>
        <taxon>Euteleostomi</taxon>
        <taxon>Mammalia</taxon>
        <taxon>Eutheria</taxon>
        <taxon>Laurasiatheria</taxon>
        <taxon>Artiodactyla</taxon>
        <taxon>Ruminantia</taxon>
        <taxon>Pecora</taxon>
        <taxon>Bovidae</taxon>
        <taxon>Bovinae</taxon>
        <taxon>Bos</taxon>
    </lineage>
</organism>
<name>RM30_BOVIN</name>
<gene>
    <name type="primary">MRPL30</name>
</gene>